<feature type="chain" id="PRO_0000153882" description="Non-specific lipid-transfer protein A">
    <location>
        <begin position="1"/>
        <end position="92"/>
    </location>
</feature>
<feature type="disulfide bond" evidence="1">
    <location>
        <begin position="3"/>
        <end position="51"/>
    </location>
</feature>
<feature type="disulfide bond" evidence="1">
    <location>
        <begin position="13"/>
        <end position="28"/>
    </location>
</feature>
<feature type="disulfide bond" evidence="1">
    <location>
        <begin position="29"/>
        <end position="74"/>
    </location>
</feature>
<feature type="disulfide bond" evidence="1">
    <location>
        <begin position="49"/>
        <end position="88"/>
    </location>
</feature>
<comment type="function">
    <text>Plant non-specific lipid-transfer proteins transfer phospholipids as well as galactolipids across membranes. May play a role in wax or cutin deposition in the cell walls of expanding epidermal cells and certain secretory tissues.</text>
</comment>
<comment type="similarity">
    <text evidence="2">Belongs to the plant LTP family.</text>
</comment>
<dbReference type="PIR" id="S07142">
    <property type="entry name" value="S07142"/>
</dbReference>
<dbReference type="SMR" id="P10973"/>
<dbReference type="eggNOG" id="ENOG502S4CI">
    <property type="taxonomic scope" value="Eukaryota"/>
</dbReference>
<dbReference type="GO" id="GO:0008289">
    <property type="term" value="F:lipid binding"/>
    <property type="evidence" value="ECO:0007669"/>
    <property type="project" value="UniProtKB-KW"/>
</dbReference>
<dbReference type="GO" id="GO:0006869">
    <property type="term" value="P:lipid transport"/>
    <property type="evidence" value="ECO:0007669"/>
    <property type="project" value="InterPro"/>
</dbReference>
<dbReference type="CDD" id="cd01960">
    <property type="entry name" value="nsLTP1"/>
    <property type="match status" value="1"/>
</dbReference>
<dbReference type="Gene3D" id="1.10.110.10">
    <property type="entry name" value="Plant lipid-transfer and hydrophobic proteins"/>
    <property type="match status" value="1"/>
</dbReference>
<dbReference type="InterPro" id="IPR036312">
    <property type="entry name" value="Bifun_inhib/LTP/seed_sf"/>
</dbReference>
<dbReference type="InterPro" id="IPR016140">
    <property type="entry name" value="Bifunc_inhib/LTP/seed_store"/>
</dbReference>
<dbReference type="InterPro" id="IPR000528">
    <property type="entry name" value="Plant_nsLTP"/>
</dbReference>
<dbReference type="PANTHER" id="PTHR33076">
    <property type="entry name" value="NON-SPECIFIC LIPID-TRANSFER PROTEIN 2-RELATED"/>
    <property type="match status" value="1"/>
</dbReference>
<dbReference type="Pfam" id="PF00234">
    <property type="entry name" value="Tryp_alpha_amyl"/>
    <property type="match status" value="1"/>
</dbReference>
<dbReference type="PRINTS" id="PR00382">
    <property type="entry name" value="LIPIDTRNSFER"/>
</dbReference>
<dbReference type="SMART" id="SM00499">
    <property type="entry name" value="AAI"/>
    <property type="match status" value="1"/>
</dbReference>
<dbReference type="SUPFAM" id="SSF47699">
    <property type="entry name" value="Bifunctional inhibitor/lipid-transfer protein/seed storage 2S albumin"/>
    <property type="match status" value="1"/>
</dbReference>
<dbReference type="PROSITE" id="PS00597">
    <property type="entry name" value="PLANT_LTP"/>
    <property type="match status" value="1"/>
</dbReference>
<evidence type="ECO:0000250" key="1"/>
<evidence type="ECO:0000305" key="2"/>
<reference key="1">
    <citation type="journal article" date="1986" name="Biochim. Biophys. Acta">
        <title>The amino-acid sequence of the nonspecific lipid transfer protein from germinated castor bean endosperms.</title>
        <authorList>
            <person name="Takishima K."/>
            <person name="Watanabe S."/>
            <person name="Yamada M."/>
            <person name="Mamiya G."/>
        </authorList>
    </citation>
    <scope>PROTEIN SEQUENCE</scope>
    <source>
        <tissue>Seed</tissue>
    </source>
</reference>
<name>NLTPA_RICCO</name>
<protein>
    <recommendedName>
        <fullName>Non-specific lipid-transfer protein A</fullName>
        <shortName>NS-LTP A</shortName>
    </recommendedName>
    <alternativeName>
        <fullName>Phospholipid transfer protein</fullName>
        <shortName>PLTP</shortName>
    </alternativeName>
</protein>
<sequence>VDCGQVNSSLASCIPFLTGGVASPSASCCAGVQNLKTLAPTSADRRAACECIKAAAARFPTIKQDAASSLPKKCGVDINIPISKTTNCQAIN</sequence>
<accession>P10973</accession>
<organism>
    <name type="scientific">Ricinus communis</name>
    <name type="common">Castor bean</name>
    <dbReference type="NCBI Taxonomy" id="3988"/>
    <lineage>
        <taxon>Eukaryota</taxon>
        <taxon>Viridiplantae</taxon>
        <taxon>Streptophyta</taxon>
        <taxon>Embryophyta</taxon>
        <taxon>Tracheophyta</taxon>
        <taxon>Spermatophyta</taxon>
        <taxon>Magnoliopsida</taxon>
        <taxon>eudicotyledons</taxon>
        <taxon>Gunneridae</taxon>
        <taxon>Pentapetalae</taxon>
        <taxon>rosids</taxon>
        <taxon>fabids</taxon>
        <taxon>Malpighiales</taxon>
        <taxon>Euphorbiaceae</taxon>
        <taxon>Acalyphoideae</taxon>
        <taxon>Acalypheae</taxon>
        <taxon>Ricinus</taxon>
    </lineage>
</organism>
<proteinExistence type="evidence at protein level"/>
<keyword id="KW-0903">Direct protein sequencing</keyword>
<keyword id="KW-1015">Disulfide bond</keyword>
<keyword id="KW-0446">Lipid-binding</keyword>
<keyword id="KW-0813">Transport</keyword>